<dbReference type="EMBL" id="CP000548">
    <property type="protein sequence ID" value="ABO05150.1"/>
    <property type="molecule type" value="Genomic_DNA"/>
</dbReference>
<dbReference type="RefSeq" id="WP_004195969.1">
    <property type="nucleotide sequence ID" value="NZ_CP007802.1"/>
</dbReference>
<dbReference type="SMR" id="A3MHR8"/>
<dbReference type="GeneID" id="93061078"/>
<dbReference type="KEGG" id="bmaz:BM44_2763"/>
<dbReference type="KEGG" id="bmn:BMA10247_0229"/>
<dbReference type="PATRIC" id="fig|320389.8.peg.3120"/>
<dbReference type="GO" id="GO:0005737">
    <property type="term" value="C:cytoplasm"/>
    <property type="evidence" value="ECO:0007669"/>
    <property type="project" value="UniProtKB-SubCell"/>
</dbReference>
<dbReference type="GO" id="GO:0005840">
    <property type="term" value="C:ribosome"/>
    <property type="evidence" value="ECO:0007669"/>
    <property type="project" value="InterPro"/>
</dbReference>
<dbReference type="GO" id="GO:0043022">
    <property type="term" value="F:ribosome binding"/>
    <property type="evidence" value="ECO:0007669"/>
    <property type="project" value="InterPro"/>
</dbReference>
<dbReference type="GO" id="GO:0042274">
    <property type="term" value="P:ribosomal small subunit biogenesis"/>
    <property type="evidence" value="ECO:0007669"/>
    <property type="project" value="UniProtKB-UniRule"/>
</dbReference>
<dbReference type="GO" id="GO:0006364">
    <property type="term" value="P:rRNA processing"/>
    <property type="evidence" value="ECO:0007669"/>
    <property type="project" value="UniProtKB-UniRule"/>
</dbReference>
<dbReference type="Gene3D" id="2.30.30.240">
    <property type="entry name" value="PRC-barrel domain"/>
    <property type="match status" value="1"/>
</dbReference>
<dbReference type="Gene3D" id="2.40.30.60">
    <property type="entry name" value="RimM"/>
    <property type="match status" value="1"/>
</dbReference>
<dbReference type="HAMAP" id="MF_00014">
    <property type="entry name" value="Ribosome_mat_RimM"/>
    <property type="match status" value="1"/>
</dbReference>
<dbReference type="InterPro" id="IPR011033">
    <property type="entry name" value="PRC_barrel-like_sf"/>
</dbReference>
<dbReference type="InterPro" id="IPR056792">
    <property type="entry name" value="PRC_RimM"/>
</dbReference>
<dbReference type="InterPro" id="IPR011961">
    <property type="entry name" value="RimM"/>
</dbReference>
<dbReference type="InterPro" id="IPR002676">
    <property type="entry name" value="RimM_N"/>
</dbReference>
<dbReference type="InterPro" id="IPR036976">
    <property type="entry name" value="RimM_N_sf"/>
</dbReference>
<dbReference type="InterPro" id="IPR009000">
    <property type="entry name" value="Transl_B-barrel_sf"/>
</dbReference>
<dbReference type="NCBIfam" id="TIGR02273">
    <property type="entry name" value="16S_RimM"/>
    <property type="match status" value="1"/>
</dbReference>
<dbReference type="PANTHER" id="PTHR33692">
    <property type="entry name" value="RIBOSOME MATURATION FACTOR RIMM"/>
    <property type="match status" value="1"/>
</dbReference>
<dbReference type="PANTHER" id="PTHR33692:SF1">
    <property type="entry name" value="RIBOSOME MATURATION FACTOR RIMM"/>
    <property type="match status" value="1"/>
</dbReference>
<dbReference type="Pfam" id="PF24986">
    <property type="entry name" value="PRC_RimM"/>
    <property type="match status" value="1"/>
</dbReference>
<dbReference type="Pfam" id="PF01782">
    <property type="entry name" value="RimM"/>
    <property type="match status" value="1"/>
</dbReference>
<dbReference type="SUPFAM" id="SSF50346">
    <property type="entry name" value="PRC-barrel domain"/>
    <property type="match status" value="1"/>
</dbReference>
<dbReference type="SUPFAM" id="SSF50447">
    <property type="entry name" value="Translation proteins"/>
    <property type="match status" value="1"/>
</dbReference>
<sequence>MAGHDSGNAKRGRSPSFGVFVRKPVERAPAKGASDGAVDSQAIRIDAAQSWPDDAVEVGAVVDAYGLKGWVKLAAHAGAGRGGDALLKARDWWLQKGAERKFARVTQAKLHGDTVVAHPDGSVDRDTALALRGARVFVRRGDFPALAADEFYWVDLIGLDVVNEAGVALGKIADMIDNGVHSIMRVEYPATGKDGRPKTGERLIPFVGVYVKAVEQAAGRVVVDWEADY</sequence>
<gene>
    <name evidence="1" type="primary">rimM</name>
    <name type="ordered locus">BMA10247_0229</name>
</gene>
<keyword id="KW-0143">Chaperone</keyword>
<keyword id="KW-0963">Cytoplasm</keyword>
<keyword id="KW-0690">Ribosome biogenesis</keyword>
<keyword id="KW-0698">rRNA processing</keyword>
<reference key="1">
    <citation type="journal article" date="2010" name="Genome Biol. Evol.">
        <title>Continuing evolution of Burkholderia mallei through genome reduction and large-scale rearrangements.</title>
        <authorList>
            <person name="Losada L."/>
            <person name="Ronning C.M."/>
            <person name="DeShazer D."/>
            <person name="Woods D."/>
            <person name="Fedorova N."/>
            <person name="Kim H.S."/>
            <person name="Shabalina S.A."/>
            <person name="Pearson T.R."/>
            <person name="Brinkac L."/>
            <person name="Tan P."/>
            <person name="Nandi T."/>
            <person name="Crabtree J."/>
            <person name="Badger J."/>
            <person name="Beckstrom-Sternberg S."/>
            <person name="Saqib M."/>
            <person name="Schutzer S.E."/>
            <person name="Keim P."/>
            <person name="Nierman W.C."/>
        </authorList>
    </citation>
    <scope>NUCLEOTIDE SEQUENCE [LARGE SCALE GENOMIC DNA]</scope>
    <source>
        <strain>NCTC 10247</strain>
    </source>
</reference>
<evidence type="ECO:0000255" key="1">
    <source>
        <dbReference type="HAMAP-Rule" id="MF_00014"/>
    </source>
</evidence>
<evidence type="ECO:0000256" key="2">
    <source>
        <dbReference type="SAM" id="MobiDB-lite"/>
    </source>
</evidence>
<proteinExistence type="inferred from homology"/>
<organism>
    <name type="scientific">Burkholderia mallei (strain NCTC 10247)</name>
    <dbReference type="NCBI Taxonomy" id="320389"/>
    <lineage>
        <taxon>Bacteria</taxon>
        <taxon>Pseudomonadati</taxon>
        <taxon>Pseudomonadota</taxon>
        <taxon>Betaproteobacteria</taxon>
        <taxon>Burkholderiales</taxon>
        <taxon>Burkholderiaceae</taxon>
        <taxon>Burkholderia</taxon>
        <taxon>pseudomallei group</taxon>
    </lineage>
</organism>
<feature type="chain" id="PRO_0000351733" description="Ribosome maturation factor RimM">
    <location>
        <begin position="1"/>
        <end position="229"/>
    </location>
</feature>
<feature type="domain" description="PRC barrel" evidence="1">
    <location>
        <begin position="148"/>
        <end position="229"/>
    </location>
</feature>
<feature type="region of interest" description="Disordered" evidence="2">
    <location>
        <begin position="1"/>
        <end position="21"/>
    </location>
</feature>
<protein>
    <recommendedName>
        <fullName evidence="1">Ribosome maturation factor RimM</fullName>
    </recommendedName>
</protein>
<name>RIMM_BURM7</name>
<accession>A3MHR8</accession>
<comment type="function">
    <text evidence="1">An accessory protein needed during the final step in the assembly of 30S ribosomal subunit, possibly for assembly of the head region. Essential for efficient processing of 16S rRNA. May be needed both before and after RbfA during the maturation of 16S rRNA. It has affinity for free ribosomal 30S subunits but not for 70S ribosomes.</text>
</comment>
<comment type="subunit">
    <text evidence="1">Binds ribosomal protein uS19.</text>
</comment>
<comment type="subcellular location">
    <subcellularLocation>
        <location evidence="1">Cytoplasm</location>
    </subcellularLocation>
</comment>
<comment type="domain">
    <text evidence="1">The PRC barrel domain binds ribosomal protein uS19.</text>
</comment>
<comment type="similarity">
    <text evidence="1">Belongs to the RimM family.</text>
</comment>